<reference key="1">
    <citation type="submission" date="2008-05" db="EMBL/GenBank/DDBJ databases">
        <title>Complete sequence of Shigella boydii serotype 18 strain BS512.</title>
        <authorList>
            <person name="Rasko D.A."/>
            <person name="Rosovitz M."/>
            <person name="Maurelli A.T."/>
            <person name="Myers G."/>
            <person name="Seshadri R."/>
            <person name="Cer R."/>
            <person name="Jiang L."/>
            <person name="Ravel J."/>
            <person name="Sebastian Y."/>
        </authorList>
    </citation>
    <scope>NUCLEOTIDE SEQUENCE [LARGE SCALE GENOMIC DNA]</scope>
    <source>
        <strain>CDC 3083-94 / BS512</strain>
    </source>
</reference>
<name>LOLA_SHIB3</name>
<evidence type="ECO:0000255" key="1">
    <source>
        <dbReference type="HAMAP-Rule" id="MF_00240"/>
    </source>
</evidence>
<gene>
    <name evidence="1" type="primary">lolA</name>
    <name type="ordered locus">SbBS512_E2437</name>
</gene>
<proteinExistence type="inferred from homology"/>
<protein>
    <recommendedName>
        <fullName evidence="1">Outer-membrane lipoprotein carrier protein</fullName>
    </recommendedName>
</protein>
<dbReference type="EMBL" id="CP001063">
    <property type="protein sequence ID" value="ACD09709.1"/>
    <property type="molecule type" value="Genomic_DNA"/>
</dbReference>
<dbReference type="RefSeq" id="WP_001295343.1">
    <property type="nucleotide sequence ID" value="NC_010658.1"/>
</dbReference>
<dbReference type="SMR" id="B2TUI7"/>
<dbReference type="STRING" id="344609.SbBS512_E2437"/>
<dbReference type="GeneID" id="93776529"/>
<dbReference type="KEGG" id="sbc:SbBS512_E2437"/>
<dbReference type="HOGENOM" id="CLU_087560_1_1_6"/>
<dbReference type="Proteomes" id="UP000001030">
    <property type="component" value="Chromosome"/>
</dbReference>
<dbReference type="GO" id="GO:0030288">
    <property type="term" value="C:outer membrane-bounded periplasmic space"/>
    <property type="evidence" value="ECO:0007669"/>
    <property type="project" value="TreeGrafter"/>
</dbReference>
<dbReference type="GO" id="GO:0044874">
    <property type="term" value="P:lipoprotein localization to outer membrane"/>
    <property type="evidence" value="ECO:0007669"/>
    <property type="project" value="UniProtKB-UniRule"/>
</dbReference>
<dbReference type="GO" id="GO:0042953">
    <property type="term" value="P:lipoprotein transport"/>
    <property type="evidence" value="ECO:0007669"/>
    <property type="project" value="InterPro"/>
</dbReference>
<dbReference type="CDD" id="cd16325">
    <property type="entry name" value="LolA"/>
    <property type="match status" value="1"/>
</dbReference>
<dbReference type="FunFam" id="2.50.20.10:FF:000001">
    <property type="entry name" value="Outer-membrane lipoprotein carrier protein"/>
    <property type="match status" value="1"/>
</dbReference>
<dbReference type="Gene3D" id="2.50.20.10">
    <property type="entry name" value="Lipoprotein localisation LolA/LolB/LppX"/>
    <property type="match status" value="1"/>
</dbReference>
<dbReference type="HAMAP" id="MF_00240">
    <property type="entry name" value="LolA"/>
    <property type="match status" value="1"/>
</dbReference>
<dbReference type="InterPro" id="IPR029046">
    <property type="entry name" value="LolA/LolB/LppX"/>
</dbReference>
<dbReference type="InterPro" id="IPR004564">
    <property type="entry name" value="OM_lipoprot_carrier_LolA-like"/>
</dbReference>
<dbReference type="InterPro" id="IPR018323">
    <property type="entry name" value="OM_lipoprot_carrier_LolA_Pbac"/>
</dbReference>
<dbReference type="NCBIfam" id="TIGR00547">
    <property type="entry name" value="lolA"/>
    <property type="match status" value="1"/>
</dbReference>
<dbReference type="PANTHER" id="PTHR35869">
    <property type="entry name" value="OUTER-MEMBRANE LIPOPROTEIN CARRIER PROTEIN"/>
    <property type="match status" value="1"/>
</dbReference>
<dbReference type="PANTHER" id="PTHR35869:SF1">
    <property type="entry name" value="OUTER-MEMBRANE LIPOPROTEIN CARRIER PROTEIN"/>
    <property type="match status" value="1"/>
</dbReference>
<dbReference type="Pfam" id="PF03548">
    <property type="entry name" value="LolA"/>
    <property type="match status" value="1"/>
</dbReference>
<dbReference type="SUPFAM" id="SSF89392">
    <property type="entry name" value="Prokaryotic lipoproteins and lipoprotein localization factors"/>
    <property type="match status" value="1"/>
</dbReference>
<feature type="signal peptide" evidence="1">
    <location>
        <begin position="1"/>
        <end position="21"/>
    </location>
</feature>
<feature type="chain" id="PRO_1000100728" description="Outer-membrane lipoprotein carrier protein">
    <location>
        <begin position="22"/>
        <end position="203"/>
    </location>
</feature>
<sequence length="203" mass="22497">MKKIAITCALLSSLVASSVWADAASDLKSRLDKVSSFHASFTQKVTDGSGAAVQEGQGDLWVKRPNLFNWHMTQPDESILVSDGKTLWFYNPFVEQATATWLKDATGNTPFMLIARNQSSDWQQYNIKQNGDDFVLTPKASNGNLKQFTINVGRDGTIHQFSAVEQDDQRSSYQLKSQQNGAVDAAKFTFTPPQGVTVDDQRK</sequence>
<accession>B2TUI7</accession>
<keyword id="KW-0143">Chaperone</keyword>
<keyword id="KW-0574">Periplasm</keyword>
<keyword id="KW-0653">Protein transport</keyword>
<keyword id="KW-1185">Reference proteome</keyword>
<keyword id="KW-0732">Signal</keyword>
<keyword id="KW-0813">Transport</keyword>
<comment type="function">
    <text evidence="1">Participates in the translocation of lipoproteins from the inner membrane to the outer membrane. Only forms a complex with a lipoprotein if the residue after the N-terminal Cys is not an aspartate (The Asp acts as a targeting signal to indicate that the lipoprotein should stay in the inner membrane).</text>
</comment>
<comment type="subunit">
    <text evidence="1">Monomer.</text>
</comment>
<comment type="subcellular location">
    <subcellularLocation>
        <location evidence="1">Periplasm</location>
    </subcellularLocation>
</comment>
<comment type="similarity">
    <text evidence="1">Belongs to the LolA family.</text>
</comment>
<organism>
    <name type="scientific">Shigella boydii serotype 18 (strain CDC 3083-94 / BS512)</name>
    <dbReference type="NCBI Taxonomy" id="344609"/>
    <lineage>
        <taxon>Bacteria</taxon>
        <taxon>Pseudomonadati</taxon>
        <taxon>Pseudomonadota</taxon>
        <taxon>Gammaproteobacteria</taxon>
        <taxon>Enterobacterales</taxon>
        <taxon>Enterobacteriaceae</taxon>
        <taxon>Shigella</taxon>
    </lineage>
</organism>